<feature type="chain" id="PRO_1000022471" description="Chorismate synthase">
    <location>
        <begin position="1"/>
        <end position="381"/>
    </location>
</feature>
<feature type="binding site" evidence="1">
    <location>
        <position position="39"/>
    </location>
    <ligand>
        <name>NADP(+)</name>
        <dbReference type="ChEBI" id="CHEBI:58349"/>
    </ligand>
</feature>
<feature type="binding site" evidence="1">
    <location>
        <position position="45"/>
    </location>
    <ligand>
        <name>NADP(+)</name>
        <dbReference type="ChEBI" id="CHEBI:58349"/>
    </ligand>
</feature>
<feature type="binding site" evidence="1">
    <location>
        <begin position="127"/>
        <end position="129"/>
    </location>
    <ligand>
        <name>FMN</name>
        <dbReference type="ChEBI" id="CHEBI:58210"/>
    </ligand>
</feature>
<feature type="binding site" evidence="1">
    <location>
        <begin position="248"/>
        <end position="249"/>
    </location>
    <ligand>
        <name>FMN</name>
        <dbReference type="ChEBI" id="CHEBI:58210"/>
    </ligand>
</feature>
<feature type="binding site" evidence="1">
    <location>
        <position position="293"/>
    </location>
    <ligand>
        <name>FMN</name>
        <dbReference type="ChEBI" id="CHEBI:58210"/>
    </ligand>
</feature>
<feature type="binding site" evidence="1">
    <location>
        <begin position="308"/>
        <end position="312"/>
    </location>
    <ligand>
        <name>FMN</name>
        <dbReference type="ChEBI" id="CHEBI:58210"/>
    </ligand>
</feature>
<feature type="binding site" evidence="1">
    <location>
        <position position="334"/>
    </location>
    <ligand>
        <name>FMN</name>
        <dbReference type="ChEBI" id="CHEBI:58210"/>
    </ligand>
</feature>
<proteinExistence type="inferred from homology"/>
<reference key="1">
    <citation type="submission" date="2007-04" db="EMBL/GenBank/DDBJ databases">
        <title>Genome sequence of the thermophilic hydrogen-producing bacterium Caldicellulosiruptor saccharolyticus DSM 8903.</title>
        <authorList>
            <person name="Copeland A."/>
            <person name="Lucas S."/>
            <person name="Lapidus A."/>
            <person name="Barry K."/>
            <person name="Detter J.C."/>
            <person name="Glavina del Rio T."/>
            <person name="Hammon N."/>
            <person name="Israni S."/>
            <person name="Dalin E."/>
            <person name="Tice H."/>
            <person name="Pitluck S."/>
            <person name="Kiss H."/>
            <person name="Brettin T."/>
            <person name="Bruce D."/>
            <person name="Han C."/>
            <person name="Schmutz J."/>
            <person name="Larimer F."/>
            <person name="Land M."/>
            <person name="Hauser L."/>
            <person name="Kyrpides N."/>
            <person name="Lykidis A."/>
            <person name="van de Werken H.J.G."/>
            <person name="Verhaart M.R.A."/>
            <person name="VanFossen A.L."/>
            <person name="Lewis D.L."/>
            <person name="Nichols J.D."/>
            <person name="Goorissen H.P."/>
            <person name="van Niel E.W.J."/>
            <person name="Stams F.J.M."/>
            <person name="Willquist K.U."/>
            <person name="Ward D.E."/>
            <person name="van der Oost J."/>
            <person name="Kelly R.M."/>
            <person name="Kengen S.M.W."/>
            <person name="Richardson P."/>
        </authorList>
    </citation>
    <scope>NUCLEOTIDE SEQUENCE [LARGE SCALE GENOMIC DNA]</scope>
    <source>
        <strain>ATCC 43494 / DSM 8903 / Tp8T 6331</strain>
    </source>
</reference>
<organism>
    <name type="scientific">Caldicellulosiruptor saccharolyticus (strain ATCC 43494 / DSM 8903 / Tp8T 6331)</name>
    <dbReference type="NCBI Taxonomy" id="351627"/>
    <lineage>
        <taxon>Bacteria</taxon>
        <taxon>Bacillati</taxon>
        <taxon>Bacillota</taxon>
        <taxon>Bacillota incertae sedis</taxon>
        <taxon>Caldicellulosiruptorales</taxon>
        <taxon>Caldicellulosiruptoraceae</taxon>
        <taxon>Caldicellulosiruptor</taxon>
    </lineage>
</organism>
<sequence length="381" mass="42221">MRFLDAGETHGRCLVGIIEGFPANVKINIDNINRLLELRQRGYGRGKRMEIEKDKATILSGVRNSYTTGAPITIMIENRDYVNWQKYMDPILCDTMTKKVTVPRPGHADLPGCLKYGFDDARPVLERASARETAMRVAIGALCEELLNVFGIKLYNHVVEIGGVRIKKEYSTDDVNLFEEAENSDLFCIDKEAENDMKQVIDSAKEAGDSVGGVAEVICKNVPFGLGSHVHWDRKLDGLLAQAVMSIQSVKGVEIGMGFEVSRRFGSEVHDEIFYDDQKGFYRKTNNAGGIEGGISNGMDIVIRAAFKPIPTLYKPLRSVDLQGLKEKEAAVERSDTCAVPAGSVVMRAAVAYVLANSLIDRLSGDSLDIMIDNYKRLYQK</sequence>
<protein>
    <recommendedName>
        <fullName evidence="1">Chorismate synthase</fullName>
        <shortName evidence="1">CS</shortName>
        <ecNumber evidence="1">4.2.3.5</ecNumber>
    </recommendedName>
    <alternativeName>
        <fullName evidence="1">5-enolpyruvylshikimate-3-phosphate phospholyase</fullName>
    </alternativeName>
</protein>
<dbReference type="EC" id="4.2.3.5" evidence="1"/>
<dbReference type="EMBL" id="CP000679">
    <property type="protein sequence ID" value="ABP67429.1"/>
    <property type="molecule type" value="Genomic_DNA"/>
</dbReference>
<dbReference type="RefSeq" id="WP_011917363.1">
    <property type="nucleotide sequence ID" value="NC_009437.1"/>
</dbReference>
<dbReference type="SMR" id="A4XKJ4"/>
<dbReference type="STRING" id="351627.Csac_1844"/>
<dbReference type="KEGG" id="csc:Csac_1844"/>
<dbReference type="eggNOG" id="COG0082">
    <property type="taxonomic scope" value="Bacteria"/>
</dbReference>
<dbReference type="HOGENOM" id="CLU_034547_2_0_9"/>
<dbReference type="OrthoDB" id="9771806at2"/>
<dbReference type="UniPathway" id="UPA00053">
    <property type="reaction ID" value="UER00090"/>
</dbReference>
<dbReference type="Proteomes" id="UP000000256">
    <property type="component" value="Chromosome"/>
</dbReference>
<dbReference type="GO" id="GO:0005829">
    <property type="term" value="C:cytosol"/>
    <property type="evidence" value="ECO:0007669"/>
    <property type="project" value="TreeGrafter"/>
</dbReference>
<dbReference type="GO" id="GO:0004107">
    <property type="term" value="F:chorismate synthase activity"/>
    <property type="evidence" value="ECO:0007669"/>
    <property type="project" value="UniProtKB-UniRule"/>
</dbReference>
<dbReference type="GO" id="GO:0010181">
    <property type="term" value="F:FMN binding"/>
    <property type="evidence" value="ECO:0007669"/>
    <property type="project" value="TreeGrafter"/>
</dbReference>
<dbReference type="GO" id="GO:0008652">
    <property type="term" value="P:amino acid biosynthetic process"/>
    <property type="evidence" value="ECO:0007669"/>
    <property type="project" value="UniProtKB-KW"/>
</dbReference>
<dbReference type="GO" id="GO:0009073">
    <property type="term" value="P:aromatic amino acid family biosynthetic process"/>
    <property type="evidence" value="ECO:0007669"/>
    <property type="project" value="UniProtKB-KW"/>
</dbReference>
<dbReference type="GO" id="GO:0009423">
    <property type="term" value="P:chorismate biosynthetic process"/>
    <property type="evidence" value="ECO:0007669"/>
    <property type="project" value="UniProtKB-UniRule"/>
</dbReference>
<dbReference type="CDD" id="cd07304">
    <property type="entry name" value="Chorismate_synthase"/>
    <property type="match status" value="1"/>
</dbReference>
<dbReference type="FunFam" id="3.60.150.10:FF:000002">
    <property type="entry name" value="Chorismate synthase"/>
    <property type="match status" value="1"/>
</dbReference>
<dbReference type="Gene3D" id="3.60.150.10">
    <property type="entry name" value="Chorismate synthase AroC"/>
    <property type="match status" value="1"/>
</dbReference>
<dbReference type="HAMAP" id="MF_00300">
    <property type="entry name" value="Chorismate_synth"/>
    <property type="match status" value="1"/>
</dbReference>
<dbReference type="InterPro" id="IPR000453">
    <property type="entry name" value="Chorismate_synth"/>
</dbReference>
<dbReference type="InterPro" id="IPR035904">
    <property type="entry name" value="Chorismate_synth_AroC_sf"/>
</dbReference>
<dbReference type="InterPro" id="IPR020541">
    <property type="entry name" value="Chorismate_synthase_CS"/>
</dbReference>
<dbReference type="NCBIfam" id="TIGR00033">
    <property type="entry name" value="aroC"/>
    <property type="match status" value="1"/>
</dbReference>
<dbReference type="NCBIfam" id="NF003793">
    <property type="entry name" value="PRK05382.1"/>
    <property type="match status" value="1"/>
</dbReference>
<dbReference type="PANTHER" id="PTHR21085">
    <property type="entry name" value="CHORISMATE SYNTHASE"/>
    <property type="match status" value="1"/>
</dbReference>
<dbReference type="PANTHER" id="PTHR21085:SF0">
    <property type="entry name" value="CHORISMATE SYNTHASE"/>
    <property type="match status" value="1"/>
</dbReference>
<dbReference type="Pfam" id="PF01264">
    <property type="entry name" value="Chorismate_synt"/>
    <property type="match status" value="1"/>
</dbReference>
<dbReference type="PIRSF" id="PIRSF001456">
    <property type="entry name" value="Chorismate_synth"/>
    <property type="match status" value="1"/>
</dbReference>
<dbReference type="SUPFAM" id="SSF103263">
    <property type="entry name" value="Chorismate synthase, AroC"/>
    <property type="match status" value="1"/>
</dbReference>
<dbReference type="PROSITE" id="PS00788">
    <property type="entry name" value="CHORISMATE_SYNTHASE_2"/>
    <property type="match status" value="1"/>
</dbReference>
<evidence type="ECO:0000255" key="1">
    <source>
        <dbReference type="HAMAP-Rule" id="MF_00300"/>
    </source>
</evidence>
<name>AROC_CALS8</name>
<comment type="function">
    <text evidence="1">Catalyzes the anti-1,4-elimination of the C-3 phosphate and the C-6 proR hydrogen from 5-enolpyruvylshikimate-3-phosphate (EPSP) to yield chorismate, which is the branch point compound that serves as the starting substrate for the three terminal pathways of aromatic amino acid biosynthesis. This reaction introduces a second double bond into the aromatic ring system.</text>
</comment>
<comment type="catalytic activity">
    <reaction evidence="1">
        <text>5-O-(1-carboxyvinyl)-3-phosphoshikimate = chorismate + phosphate</text>
        <dbReference type="Rhea" id="RHEA:21020"/>
        <dbReference type="ChEBI" id="CHEBI:29748"/>
        <dbReference type="ChEBI" id="CHEBI:43474"/>
        <dbReference type="ChEBI" id="CHEBI:57701"/>
        <dbReference type="EC" id="4.2.3.5"/>
    </reaction>
</comment>
<comment type="cofactor">
    <cofactor evidence="1">
        <name>FMNH2</name>
        <dbReference type="ChEBI" id="CHEBI:57618"/>
    </cofactor>
    <text evidence="1">Reduced FMN (FMNH(2)).</text>
</comment>
<comment type="pathway">
    <text evidence="1">Metabolic intermediate biosynthesis; chorismate biosynthesis; chorismate from D-erythrose 4-phosphate and phosphoenolpyruvate: step 7/7.</text>
</comment>
<comment type="subunit">
    <text evidence="1">Homotetramer.</text>
</comment>
<comment type="similarity">
    <text evidence="1">Belongs to the chorismate synthase family.</text>
</comment>
<keyword id="KW-0028">Amino-acid biosynthesis</keyword>
<keyword id="KW-0057">Aromatic amino acid biosynthesis</keyword>
<keyword id="KW-0274">FAD</keyword>
<keyword id="KW-0285">Flavoprotein</keyword>
<keyword id="KW-0288">FMN</keyword>
<keyword id="KW-0456">Lyase</keyword>
<keyword id="KW-0521">NADP</keyword>
<gene>
    <name evidence="1" type="primary">aroC</name>
    <name type="ordered locus">Csac_1844</name>
</gene>
<accession>A4XKJ4</accession>